<reference key="1">
    <citation type="journal article" date="2005" name="Science">
        <title>The transcriptional landscape of the mammalian genome.</title>
        <authorList>
            <person name="Carninci P."/>
            <person name="Kasukawa T."/>
            <person name="Katayama S."/>
            <person name="Gough J."/>
            <person name="Frith M.C."/>
            <person name="Maeda N."/>
            <person name="Oyama R."/>
            <person name="Ravasi T."/>
            <person name="Lenhard B."/>
            <person name="Wells C."/>
            <person name="Kodzius R."/>
            <person name="Shimokawa K."/>
            <person name="Bajic V.B."/>
            <person name="Brenner S.E."/>
            <person name="Batalov S."/>
            <person name="Forrest A.R."/>
            <person name="Zavolan M."/>
            <person name="Davis M.J."/>
            <person name="Wilming L.G."/>
            <person name="Aidinis V."/>
            <person name="Allen J.E."/>
            <person name="Ambesi-Impiombato A."/>
            <person name="Apweiler R."/>
            <person name="Aturaliya R.N."/>
            <person name="Bailey T.L."/>
            <person name="Bansal M."/>
            <person name="Baxter L."/>
            <person name="Beisel K.W."/>
            <person name="Bersano T."/>
            <person name="Bono H."/>
            <person name="Chalk A.M."/>
            <person name="Chiu K.P."/>
            <person name="Choudhary V."/>
            <person name="Christoffels A."/>
            <person name="Clutterbuck D.R."/>
            <person name="Crowe M.L."/>
            <person name="Dalla E."/>
            <person name="Dalrymple B.P."/>
            <person name="de Bono B."/>
            <person name="Della Gatta G."/>
            <person name="di Bernardo D."/>
            <person name="Down T."/>
            <person name="Engstrom P."/>
            <person name="Fagiolini M."/>
            <person name="Faulkner G."/>
            <person name="Fletcher C.F."/>
            <person name="Fukushima T."/>
            <person name="Furuno M."/>
            <person name="Futaki S."/>
            <person name="Gariboldi M."/>
            <person name="Georgii-Hemming P."/>
            <person name="Gingeras T.R."/>
            <person name="Gojobori T."/>
            <person name="Green R.E."/>
            <person name="Gustincich S."/>
            <person name="Harbers M."/>
            <person name="Hayashi Y."/>
            <person name="Hensch T.K."/>
            <person name="Hirokawa N."/>
            <person name="Hill D."/>
            <person name="Huminiecki L."/>
            <person name="Iacono M."/>
            <person name="Ikeo K."/>
            <person name="Iwama A."/>
            <person name="Ishikawa T."/>
            <person name="Jakt M."/>
            <person name="Kanapin A."/>
            <person name="Katoh M."/>
            <person name="Kawasawa Y."/>
            <person name="Kelso J."/>
            <person name="Kitamura H."/>
            <person name="Kitano H."/>
            <person name="Kollias G."/>
            <person name="Krishnan S.P."/>
            <person name="Kruger A."/>
            <person name="Kummerfeld S.K."/>
            <person name="Kurochkin I.V."/>
            <person name="Lareau L.F."/>
            <person name="Lazarevic D."/>
            <person name="Lipovich L."/>
            <person name="Liu J."/>
            <person name="Liuni S."/>
            <person name="McWilliam S."/>
            <person name="Madan Babu M."/>
            <person name="Madera M."/>
            <person name="Marchionni L."/>
            <person name="Matsuda H."/>
            <person name="Matsuzawa S."/>
            <person name="Miki H."/>
            <person name="Mignone F."/>
            <person name="Miyake S."/>
            <person name="Morris K."/>
            <person name="Mottagui-Tabar S."/>
            <person name="Mulder N."/>
            <person name="Nakano N."/>
            <person name="Nakauchi H."/>
            <person name="Ng P."/>
            <person name="Nilsson R."/>
            <person name="Nishiguchi S."/>
            <person name="Nishikawa S."/>
            <person name="Nori F."/>
            <person name="Ohara O."/>
            <person name="Okazaki Y."/>
            <person name="Orlando V."/>
            <person name="Pang K.C."/>
            <person name="Pavan W.J."/>
            <person name="Pavesi G."/>
            <person name="Pesole G."/>
            <person name="Petrovsky N."/>
            <person name="Piazza S."/>
            <person name="Reed J."/>
            <person name="Reid J.F."/>
            <person name="Ring B.Z."/>
            <person name="Ringwald M."/>
            <person name="Rost B."/>
            <person name="Ruan Y."/>
            <person name="Salzberg S.L."/>
            <person name="Sandelin A."/>
            <person name="Schneider C."/>
            <person name="Schoenbach C."/>
            <person name="Sekiguchi K."/>
            <person name="Semple C.A."/>
            <person name="Seno S."/>
            <person name="Sessa L."/>
            <person name="Sheng Y."/>
            <person name="Shibata Y."/>
            <person name="Shimada H."/>
            <person name="Shimada K."/>
            <person name="Silva D."/>
            <person name="Sinclair B."/>
            <person name="Sperling S."/>
            <person name="Stupka E."/>
            <person name="Sugiura K."/>
            <person name="Sultana R."/>
            <person name="Takenaka Y."/>
            <person name="Taki K."/>
            <person name="Tammoja K."/>
            <person name="Tan S.L."/>
            <person name="Tang S."/>
            <person name="Taylor M.S."/>
            <person name="Tegner J."/>
            <person name="Teichmann S.A."/>
            <person name="Ueda H.R."/>
            <person name="van Nimwegen E."/>
            <person name="Verardo R."/>
            <person name="Wei C.L."/>
            <person name="Yagi K."/>
            <person name="Yamanishi H."/>
            <person name="Zabarovsky E."/>
            <person name="Zhu S."/>
            <person name="Zimmer A."/>
            <person name="Hide W."/>
            <person name="Bult C."/>
            <person name="Grimmond S.M."/>
            <person name="Teasdale R.D."/>
            <person name="Liu E.T."/>
            <person name="Brusic V."/>
            <person name="Quackenbush J."/>
            <person name="Wahlestedt C."/>
            <person name="Mattick J.S."/>
            <person name="Hume D.A."/>
            <person name="Kai C."/>
            <person name="Sasaki D."/>
            <person name="Tomaru Y."/>
            <person name="Fukuda S."/>
            <person name="Kanamori-Katayama M."/>
            <person name="Suzuki M."/>
            <person name="Aoki J."/>
            <person name="Arakawa T."/>
            <person name="Iida J."/>
            <person name="Imamura K."/>
            <person name="Itoh M."/>
            <person name="Kato T."/>
            <person name="Kawaji H."/>
            <person name="Kawagashira N."/>
            <person name="Kawashima T."/>
            <person name="Kojima M."/>
            <person name="Kondo S."/>
            <person name="Konno H."/>
            <person name="Nakano K."/>
            <person name="Ninomiya N."/>
            <person name="Nishio T."/>
            <person name="Okada M."/>
            <person name="Plessy C."/>
            <person name="Shibata K."/>
            <person name="Shiraki T."/>
            <person name="Suzuki S."/>
            <person name="Tagami M."/>
            <person name="Waki K."/>
            <person name="Watahiki A."/>
            <person name="Okamura-Oho Y."/>
            <person name="Suzuki H."/>
            <person name="Kawai J."/>
            <person name="Hayashizaki Y."/>
        </authorList>
    </citation>
    <scope>NUCLEOTIDE SEQUENCE [LARGE SCALE MRNA] (ISOFORMS 1 AND 2)</scope>
    <source>
        <strain>C57BL/6J</strain>
        <tissue>Amnion</tissue>
        <tissue>Heart</tissue>
        <tissue>Medulla oblongata</tissue>
        <tissue>Placenta</tissue>
        <tissue>Small intestine</tissue>
        <tissue>Stomach</tissue>
    </source>
</reference>
<reference key="2">
    <citation type="journal article" date="2004" name="Genome Res.">
        <title>The status, quality, and expansion of the NIH full-length cDNA project: the Mammalian Gene Collection (MGC).</title>
        <authorList>
            <consortium name="The MGC Project Team"/>
        </authorList>
    </citation>
    <scope>NUCLEOTIDE SEQUENCE [LARGE SCALE MRNA] (ISOFORM 1)</scope>
    <source>
        <strain>C57BL/6J</strain>
        <tissue>Mammary gland</tissue>
    </source>
</reference>
<reference key="3">
    <citation type="journal article" date="2003" name="J. Biol. Chem.">
        <title>Sorcin inhibits calcium release and modulates excitation-contraction coupling in the heart.</title>
        <authorList>
            <person name="Farrell E.F."/>
            <person name="Antaramian A."/>
            <person name="Rueda A."/>
            <person name="Gomez A.M."/>
            <person name="Valdivia H.H."/>
        </authorList>
    </citation>
    <scope>FUNCTION</scope>
    <scope>SUBCELLULAR LOCATION</scope>
    <scope>INTERACTION WITH RYR2</scope>
    <scope>TISSUE SPECIFICITY</scope>
</reference>
<reference key="4">
    <citation type="journal article" date="2010" name="Cell">
        <title>A tissue-specific atlas of mouse protein phosphorylation and expression.</title>
        <authorList>
            <person name="Huttlin E.L."/>
            <person name="Jedrychowski M.P."/>
            <person name="Elias J.E."/>
            <person name="Goswami T."/>
            <person name="Rad R."/>
            <person name="Beausoleil S.A."/>
            <person name="Villen J."/>
            <person name="Haas W."/>
            <person name="Sowa M.E."/>
            <person name="Gygi S.P."/>
        </authorList>
    </citation>
    <scope>IDENTIFICATION BY MASS SPECTROMETRY [LARGE SCALE ANALYSIS]</scope>
    <source>
        <tissue>Brain</tissue>
        <tissue>Brown adipose tissue</tissue>
        <tissue>Heart</tissue>
        <tissue>Kidney</tissue>
        <tissue>Liver</tissue>
        <tissue>Lung</tissue>
        <tissue>Pancreas</tissue>
        <tissue>Spleen</tissue>
        <tissue>Testis</tissue>
    </source>
</reference>
<keyword id="KW-0025">Alternative splicing</keyword>
<keyword id="KW-0106">Calcium</keyword>
<keyword id="KW-0963">Cytoplasm</keyword>
<keyword id="KW-0472">Membrane</keyword>
<keyword id="KW-0479">Metal-binding</keyword>
<keyword id="KW-0597">Phosphoprotein</keyword>
<keyword id="KW-1185">Reference proteome</keyword>
<keyword id="KW-0677">Repeat</keyword>
<keyword id="KW-0703">Sarcoplasmic reticulum</keyword>
<feature type="chain" id="PRO_0000073726" description="Sorcin">
    <location>
        <begin position="1"/>
        <end position="198"/>
    </location>
</feature>
<feature type="domain" description="EF-hand 1" evidence="3">
    <location>
        <begin position="45"/>
        <end position="64"/>
    </location>
</feature>
<feature type="domain" description="EF-hand 2" evidence="3">
    <location>
        <begin position="70"/>
        <end position="98"/>
    </location>
</feature>
<feature type="domain" description="EF-hand 3" evidence="3">
    <location>
        <begin position="100"/>
        <end position="135"/>
    </location>
</feature>
<feature type="domain" description="EF-hand 4" evidence="3">
    <location>
        <begin position="151"/>
        <end position="169"/>
    </location>
</feature>
<feature type="binding site" evidence="3">
    <location>
        <position position="83"/>
    </location>
    <ligand>
        <name>Ca(2+)</name>
        <dbReference type="ChEBI" id="CHEBI:29108"/>
        <label>1</label>
    </ligand>
</feature>
<feature type="binding site" evidence="3">
    <location>
        <position position="85"/>
    </location>
    <ligand>
        <name>Ca(2+)</name>
        <dbReference type="ChEBI" id="CHEBI:29108"/>
        <label>1</label>
    </ligand>
</feature>
<feature type="binding site" evidence="3">
    <location>
        <position position="87"/>
    </location>
    <ligand>
        <name>Ca(2+)</name>
        <dbReference type="ChEBI" id="CHEBI:29108"/>
        <label>1</label>
    </ligand>
</feature>
<feature type="binding site" evidence="3">
    <location>
        <position position="89"/>
    </location>
    <ligand>
        <name>Ca(2+)</name>
        <dbReference type="ChEBI" id="CHEBI:29108"/>
        <label>1</label>
    </ligand>
</feature>
<feature type="binding site" evidence="3">
    <location>
        <position position="94"/>
    </location>
    <ligand>
        <name>Ca(2+)</name>
        <dbReference type="ChEBI" id="CHEBI:29108"/>
        <label>1</label>
    </ligand>
</feature>
<feature type="binding site" evidence="3">
    <location>
        <position position="113"/>
    </location>
    <ligand>
        <name>Ca(2+)</name>
        <dbReference type="ChEBI" id="CHEBI:29108"/>
        <label>2</label>
    </ligand>
</feature>
<feature type="binding site" evidence="3">
    <location>
        <position position="115"/>
    </location>
    <ligand>
        <name>Ca(2+)</name>
        <dbReference type="ChEBI" id="CHEBI:29108"/>
        <label>2</label>
    </ligand>
</feature>
<feature type="binding site" evidence="3">
    <location>
        <position position="117"/>
    </location>
    <ligand>
        <name>Ca(2+)</name>
        <dbReference type="ChEBI" id="CHEBI:29108"/>
        <label>2</label>
    </ligand>
</feature>
<feature type="binding site" evidence="3">
    <location>
        <position position="119"/>
    </location>
    <ligand>
        <name>Ca(2+)</name>
        <dbReference type="ChEBI" id="CHEBI:29108"/>
        <label>2</label>
    </ligand>
</feature>
<feature type="binding site" evidence="3">
    <location>
        <position position="124"/>
    </location>
    <ligand>
        <name>Ca(2+)</name>
        <dbReference type="ChEBI" id="CHEBI:29108"/>
        <label>2</label>
    </ligand>
</feature>
<feature type="modified residue" description="Phosphoserine" evidence="2">
    <location>
        <position position="178"/>
    </location>
</feature>
<feature type="splice variant" id="VSP_013448" description="In isoform 2." evidence="5">
    <original>MAYPGHPGAGGGYYPGG</original>
    <variation>MQ</variation>
    <location>
        <begin position="1"/>
        <end position="17"/>
    </location>
</feature>
<feature type="sequence conflict" description="In Ref. 1; BAB25891." evidence="6" ref="1">
    <original>P</original>
    <variation>A</variation>
    <location>
        <position position="25"/>
    </location>
</feature>
<organism>
    <name type="scientific">Mus musculus</name>
    <name type="common">Mouse</name>
    <dbReference type="NCBI Taxonomy" id="10090"/>
    <lineage>
        <taxon>Eukaryota</taxon>
        <taxon>Metazoa</taxon>
        <taxon>Chordata</taxon>
        <taxon>Craniata</taxon>
        <taxon>Vertebrata</taxon>
        <taxon>Euteleostomi</taxon>
        <taxon>Mammalia</taxon>
        <taxon>Eutheria</taxon>
        <taxon>Euarchontoglires</taxon>
        <taxon>Glires</taxon>
        <taxon>Rodentia</taxon>
        <taxon>Myomorpha</taxon>
        <taxon>Muroidea</taxon>
        <taxon>Muridae</taxon>
        <taxon>Murinae</taxon>
        <taxon>Mus</taxon>
        <taxon>Mus</taxon>
    </lineage>
</organism>
<protein>
    <recommendedName>
        <fullName>Sorcin</fullName>
    </recommendedName>
</protein>
<proteinExistence type="evidence at protein level"/>
<accession>Q6P069</accession>
<accession>Q3UKC5</accession>
<accession>Q9CR38</accession>
<accession>Q9D7V8</accession>
<comment type="function">
    <text evidence="4">Calcium-binding protein that modulates excitation-contraction coupling in the heart. Contributes to calcium homeostasis in the heart sarcoplasmic reticulum. Modulates the activity of RYR2 calcium channels.</text>
</comment>
<comment type="subunit">
    <text evidence="1">Homodimer. Interacts with GCA, RYR2 and ANXA7 (By similarity).</text>
</comment>
<comment type="subcellular location">
    <subcellularLocation>
        <location evidence="4">Cytoplasm</location>
    </subcellularLocation>
    <subcellularLocation>
        <location evidence="4">Sarcoplasmic reticulum membrane</location>
        <topology evidence="4">Peripheral membrane protein</topology>
        <orientation evidence="4">Cytoplasmic side</orientation>
    </subcellularLocation>
    <text>Relocates to the sarcoplasmic reticulum membrane in response to elevated calcium levels.</text>
</comment>
<comment type="alternative products">
    <event type="alternative splicing"/>
    <isoform>
        <id>Q6P069-1</id>
        <name>1</name>
        <sequence type="displayed"/>
    </isoform>
    <isoform>
        <id>Q6P069-2</id>
        <name>2</name>
        <sequence type="described" ref="VSP_013448"/>
    </isoform>
</comment>
<comment type="tissue specificity">
    <text evidence="4">Detected in cardiac myocytes.</text>
</comment>
<comment type="miscellaneous">
    <text evidence="1">This protein has been shown to bind calcium with high affinity.</text>
</comment>
<name>SORCN_MOUSE</name>
<gene>
    <name type="primary">Sri</name>
</gene>
<dbReference type="EMBL" id="AK008404">
    <property type="protein sequence ID" value="BAB25652.1"/>
    <property type="molecule type" value="mRNA"/>
</dbReference>
<dbReference type="EMBL" id="AK008783">
    <property type="protein sequence ID" value="BAB25891.1"/>
    <property type="molecule type" value="mRNA"/>
</dbReference>
<dbReference type="EMBL" id="AK008970">
    <property type="protein sequence ID" value="BAB25997.1"/>
    <property type="molecule type" value="mRNA"/>
</dbReference>
<dbReference type="EMBL" id="AK134747">
    <property type="protein sequence ID" value="BAE22266.1"/>
    <property type="molecule type" value="mRNA"/>
</dbReference>
<dbReference type="EMBL" id="AK146071">
    <property type="protein sequence ID" value="BAE26876.1"/>
    <property type="molecule type" value="mRNA"/>
</dbReference>
<dbReference type="EMBL" id="AK146911">
    <property type="protein sequence ID" value="BAE27523.1"/>
    <property type="molecule type" value="mRNA"/>
</dbReference>
<dbReference type="EMBL" id="AK168572">
    <property type="protein sequence ID" value="BAE40442.1"/>
    <property type="molecule type" value="mRNA"/>
</dbReference>
<dbReference type="EMBL" id="AK168792">
    <property type="protein sequence ID" value="BAE40625.1"/>
    <property type="molecule type" value="mRNA"/>
</dbReference>
<dbReference type="EMBL" id="AK168900">
    <property type="protein sequence ID" value="BAE40716.1"/>
    <property type="molecule type" value="mRNA"/>
</dbReference>
<dbReference type="EMBL" id="BC065790">
    <property type="protein sequence ID" value="AAH65790.1"/>
    <property type="molecule type" value="mRNA"/>
</dbReference>
<dbReference type="CCDS" id="CCDS19079.1">
    <molecule id="Q6P069-2"/>
</dbReference>
<dbReference type="CCDS" id="CCDS39009.1">
    <molecule id="Q6P069-1"/>
</dbReference>
<dbReference type="RefSeq" id="NP_001074443.1">
    <molecule id="Q6P069-1"/>
    <property type="nucleotide sequence ID" value="NM_001080974.2"/>
</dbReference>
<dbReference type="RefSeq" id="NP_079894.2">
    <molecule id="Q6P069-2"/>
    <property type="nucleotide sequence ID" value="NM_025618.3"/>
</dbReference>
<dbReference type="SMR" id="Q6P069"/>
<dbReference type="BioGRID" id="224853">
    <property type="interactions" value="6"/>
</dbReference>
<dbReference type="FunCoup" id="Q6P069">
    <property type="interactions" value="1235"/>
</dbReference>
<dbReference type="STRING" id="10090.ENSMUSP00000118221"/>
<dbReference type="iPTMnet" id="Q6P069"/>
<dbReference type="PhosphoSitePlus" id="Q6P069"/>
<dbReference type="SwissPalm" id="Q6P069"/>
<dbReference type="REPRODUCTION-2DPAGE" id="IPI00556765"/>
<dbReference type="jPOST" id="Q6P069"/>
<dbReference type="PaxDb" id="10090-ENSMUSP00000118221"/>
<dbReference type="PeptideAtlas" id="Q6P069"/>
<dbReference type="ProteomicsDB" id="261608">
    <molecule id="Q6P069-1"/>
</dbReference>
<dbReference type="ProteomicsDB" id="261609">
    <molecule id="Q6P069-2"/>
</dbReference>
<dbReference type="Pumba" id="Q6P069"/>
<dbReference type="Antibodypedia" id="29805">
    <property type="antibodies" value="194 antibodies from 31 providers"/>
</dbReference>
<dbReference type="DNASU" id="109552"/>
<dbReference type="Ensembl" id="ENSMUST00000088786.11">
    <molecule id="Q6P069-2"/>
    <property type="protein sequence ID" value="ENSMUSP00000086165.5"/>
    <property type="gene ID" value="ENSMUSG00000003161.16"/>
</dbReference>
<dbReference type="Ensembl" id="ENSMUST00000148633.4">
    <molecule id="Q6P069-1"/>
    <property type="protein sequence ID" value="ENSMUSP00000118221.2"/>
    <property type="gene ID" value="ENSMUSG00000003161.16"/>
</dbReference>
<dbReference type="GeneID" id="109552"/>
<dbReference type="KEGG" id="mmu:109552"/>
<dbReference type="UCSC" id="uc008wjh.2">
    <molecule id="Q6P069-2"/>
    <property type="organism name" value="mouse"/>
</dbReference>
<dbReference type="UCSC" id="uc008wji.2">
    <molecule id="Q6P069-1"/>
    <property type="organism name" value="mouse"/>
</dbReference>
<dbReference type="AGR" id="MGI:98419"/>
<dbReference type="CTD" id="6717"/>
<dbReference type="MGI" id="MGI:98419">
    <property type="gene designation" value="Sri"/>
</dbReference>
<dbReference type="VEuPathDB" id="HostDB:ENSMUSG00000003161"/>
<dbReference type="eggNOG" id="KOG0037">
    <property type="taxonomic scope" value="Eukaryota"/>
</dbReference>
<dbReference type="GeneTree" id="ENSGT00940000153979"/>
<dbReference type="HOGENOM" id="CLU_051357_4_1_1"/>
<dbReference type="InParanoid" id="Q6P069"/>
<dbReference type="OMA" id="LNQFIYC"/>
<dbReference type="OrthoDB" id="186625at2759"/>
<dbReference type="PhylomeDB" id="Q6P069"/>
<dbReference type="TreeFam" id="TF314682"/>
<dbReference type="Reactome" id="R-MMU-2672351">
    <property type="pathway name" value="Stimuli-sensing channels"/>
</dbReference>
<dbReference type="Reactome" id="R-MMU-418359">
    <property type="pathway name" value="Reduction of cytosolic Ca++ levels"/>
</dbReference>
<dbReference type="Reactome" id="R-MMU-425561">
    <property type="pathway name" value="Sodium/Calcium exchangers"/>
</dbReference>
<dbReference type="Reactome" id="R-MMU-5578775">
    <property type="pathway name" value="Ion homeostasis"/>
</dbReference>
<dbReference type="Reactome" id="R-MMU-936837">
    <property type="pathway name" value="Ion transport by P-type ATPases"/>
</dbReference>
<dbReference type="BioGRID-ORCS" id="109552">
    <property type="hits" value="1 hit in 77 CRISPR screens"/>
</dbReference>
<dbReference type="ChiTaRS" id="Sri">
    <property type="organism name" value="mouse"/>
</dbReference>
<dbReference type="PRO" id="PR:Q6P069"/>
<dbReference type="Proteomes" id="UP000000589">
    <property type="component" value="Chromosome 5"/>
</dbReference>
<dbReference type="RNAct" id="Q6P069">
    <property type="molecule type" value="protein"/>
</dbReference>
<dbReference type="Bgee" id="ENSMUSG00000003161">
    <property type="expression patterns" value="Expressed in granulocyte and 263 other cell types or tissues"/>
</dbReference>
<dbReference type="GO" id="GO:0042584">
    <property type="term" value="C:chromaffin granule membrane"/>
    <property type="evidence" value="ECO:0007669"/>
    <property type="project" value="Ensembl"/>
</dbReference>
<dbReference type="GO" id="GO:0005829">
    <property type="term" value="C:cytosol"/>
    <property type="evidence" value="ECO:0007669"/>
    <property type="project" value="Ensembl"/>
</dbReference>
<dbReference type="GO" id="GO:0070062">
    <property type="term" value="C:extracellular exosome"/>
    <property type="evidence" value="ECO:0007669"/>
    <property type="project" value="Ensembl"/>
</dbReference>
<dbReference type="GO" id="GO:0005654">
    <property type="term" value="C:nucleoplasm"/>
    <property type="evidence" value="ECO:0007669"/>
    <property type="project" value="Ensembl"/>
</dbReference>
<dbReference type="GO" id="GO:0005886">
    <property type="term" value="C:plasma membrane"/>
    <property type="evidence" value="ECO:0000314"/>
    <property type="project" value="MGI"/>
</dbReference>
<dbReference type="GO" id="GO:0033017">
    <property type="term" value="C:sarcoplasmic reticulum membrane"/>
    <property type="evidence" value="ECO:0007669"/>
    <property type="project" value="UniProtKB-SubCell"/>
</dbReference>
<dbReference type="GO" id="GO:0031982">
    <property type="term" value="C:vesicle"/>
    <property type="evidence" value="ECO:0000314"/>
    <property type="project" value="MGI"/>
</dbReference>
<dbReference type="GO" id="GO:0030018">
    <property type="term" value="C:Z disc"/>
    <property type="evidence" value="ECO:0000314"/>
    <property type="project" value="BHF-UCL"/>
</dbReference>
<dbReference type="GO" id="GO:0005509">
    <property type="term" value="F:calcium ion binding"/>
    <property type="evidence" value="ECO:0007669"/>
    <property type="project" value="Ensembl"/>
</dbReference>
<dbReference type="GO" id="GO:0140297">
    <property type="term" value="F:DNA-binding transcription factor binding"/>
    <property type="evidence" value="ECO:0000353"/>
    <property type="project" value="BHF-UCL"/>
</dbReference>
<dbReference type="GO" id="GO:0002020">
    <property type="term" value="F:protease binding"/>
    <property type="evidence" value="ECO:0007669"/>
    <property type="project" value="Ensembl"/>
</dbReference>
<dbReference type="GO" id="GO:0046982">
    <property type="term" value="F:protein heterodimerization activity"/>
    <property type="evidence" value="ECO:0007669"/>
    <property type="project" value="Ensembl"/>
</dbReference>
<dbReference type="GO" id="GO:0140311">
    <property type="term" value="F:protein sequestering activity"/>
    <property type="evidence" value="ECO:0000315"/>
    <property type="project" value="BHF-UCL"/>
</dbReference>
<dbReference type="GO" id="GO:0140416">
    <property type="term" value="F:transcription regulator inhibitor activity"/>
    <property type="evidence" value="ECO:0000315"/>
    <property type="project" value="BHF-UCL"/>
</dbReference>
<dbReference type="GO" id="GO:0006816">
    <property type="term" value="P:calcium ion transport"/>
    <property type="evidence" value="ECO:0000353"/>
    <property type="project" value="MGI"/>
</dbReference>
<dbReference type="GO" id="GO:0055118">
    <property type="term" value="P:negative regulation of cardiac muscle contraction"/>
    <property type="evidence" value="ECO:0000315"/>
    <property type="project" value="BHF-UCL"/>
</dbReference>
<dbReference type="GO" id="GO:0010459">
    <property type="term" value="P:negative regulation of heart rate"/>
    <property type="evidence" value="ECO:0007669"/>
    <property type="project" value="Ensembl"/>
</dbReference>
<dbReference type="GO" id="GO:0051281">
    <property type="term" value="P:positive regulation of release of sequestered calcium ion into cytosol"/>
    <property type="evidence" value="ECO:0000315"/>
    <property type="project" value="BHF-UCL"/>
</dbReference>
<dbReference type="GO" id="GO:0086004">
    <property type="term" value="P:regulation of cardiac muscle cell contraction"/>
    <property type="evidence" value="ECO:0007669"/>
    <property type="project" value="Ensembl"/>
</dbReference>
<dbReference type="GO" id="GO:1901844">
    <property type="term" value="P:regulation of cell communication by electrical coupling involved in cardiac conduction"/>
    <property type="evidence" value="ECO:0007669"/>
    <property type="project" value="Ensembl"/>
</dbReference>
<dbReference type="GO" id="GO:0061178">
    <property type="term" value="P:regulation of insulin secretion involved in cellular response to glucose stimulus"/>
    <property type="evidence" value="ECO:0000315"/>
    <property type="project" value="BHF-UCL"/>
</dbReference>
<dbReference type="GO" id="GO:1901077">
    <property type="term" value="P:regulation of relaxation of muscle"/>
    <property type="evidence" value="ECO:0007669"/>
    <property type="project" value="Ensembl"/>
</dbReference>
<dbReference type="GO" id="GO:0010880">
    <property type="term" value="P:regulation of release of sequestered calcium ion into cytosol by sarcoplasmic reticulum"/>
    <property type="evidence" value="ECO:0007669"/>
    <property type="project" value="Ensembl"/>
</dbReference>
<dbReference type="CDD" id="cd16187">
    <property type="entry name" value="EFh_PEF_sorcin"/>
    <property type="match status" value="1"/>
</dbReference>
<dbReference type="FunFam" id="1.10.238.10:FF:000087">
    <property type="entry name" value="Sorcin"/>
    <property type="match status" value="1"/>
</dbReference>
<dbReference type="Gene3D" id="6.10.140.900">
    <property type="match status" value="1"/>
</dbReference>
<dbReference type="Gene3D" id="1.10.238.10">
    <property type="entry name" value="EF-hand"/>
    <property type="match status" value="1"/>
</dbReference>
<dbReference type="InterPro" id="IPR011992">
    <property type="entry name" value="EF-hand-dom_pair"/>
</dbReference>
<dbReference type="InterPro" id="IPR018247">
    <property type="entry name" value="EF_Hand_1_Ca_BS"/>
</dbReference>
<dbReference type="InterPro" id="IPR002048">
    <property type="entry name" value="EF_hand_dom"/>
</dbReference>
<dbReference type="PANTHER" id="PTHR46735">
    <property type="entry name" value="CALPAIN, SMALL SUBUNIT 1 A-RELATED"/>
    <property type="match status" value="1"/>
</dbReference>
<dbReference type="PANTHER" id="PTHR46735:SF7">
    <property type="entry name" value="SORCIN"/>
    <property type="match status" value="1"/>
</dbReference>
<dbReference type="Pfam" id="PF13499">
    <property type="entry name" value="EF-hand_7"/>
    <property type="match status" value="1"/>
</dbReference>
<dbReference type="Pfam" id="PF13833">
    <property type="entry name" value="EF-hand_8"/>
    <property type="match status" value="1"/>
</dbReference>
<dbReference type="SMART" id="SM00054">
    <property type="entry name" value="EFh"/>
    <property type="match status" value="2"/>
</dbReference>
<dbReference type="SUPFAM" id="SSF47473">
    <property type="entry name" value="EF-hand"/>
    <property type="match status" value="1"/>
</dbReference>
<dbReference type="PROSITE" id="PS00018">
    <property type="entry name" value="EF_HAND_1"/>
    <property type="match status" value="2"/>
</dbReference>
<dbReference type="PROSITE" id="PS50222">
    <property type="entry name" value="EF_HAND_2"/>
    <property type="match status" value="4"/>
</dbReference>
<evidence type="ECO:0000250" key="1"/>
<evidence type="ECO:0000250" key="2">
    <source>
        <dbReference type="UniProtKB" id="P05044"/>
    </source>
</evidence>
<evidence type="ECO:0000255" key="3">
    <source>
        <dbReference type="PROSITE-ProRule" id="PRU00448"/>
    </source>
</evidence>
<evidence type="ECO:0000269" key="4">
    <source>
    </source>
</evidence>
<evidence type="ECO:0000303" key="5">
    <source>
    </source>
</evidence>
<evidence type="ECO:0000305" key="6"/>
<sequence>MAYPGHPGAGGGYYPGGYGGAPGGPAFPGQTQDPLYGYFAAVAGQDGQIDADELQRCLTQSGIAGGYKPFNLETCRLMVSMLDRDMSGTMGFNEFKELWAVLNGWRQHFISFDSDRSGTVDPQELQKALTTMGFRLSPQTVNSVAKRYSTSGKITFDDYIACCVKLRALTDSFRRRDSGQQGVVNFSYDDFIQCVMTV</sequence>